<comment type="function">
    <text>The VP7 protein is one of the five proteins (with VP1, VP3, VP4, and VP6) which form the inner capsid of the virus.</text>
</comment>
<comment type="subcellular location">
    <subcellularLocation>
        <location evidence="2">Virion</location>
    </subcellularLocation>
</comment>
<comment type="similarity">
    <text evidence="2">Belongs to the orbivirus VP7 family.</text>
</comment>
<sequence>MDTIAARALTVIKACNTLKEVRIVVESNVLEILGIAVNRYNGLTLRSVTMRPTSQEQRNEMFYMCLDMILAAANLNVGNISPDYIQNLATIGVLATPEIPYTMESANEIARMSGETGTWGPDRQPFGYFLAAPEVTQHGRFRQRVGQNVTTSIVSSTLAQVSMNAGARGDIQALFQNQNDPVMIYFVWRRIGTFSNAAGNAQDTPQGVTLNVGGVNMRAGVIIAYDGQAPVNVNNPGLGQGMIEIEVIYYLSLDKTMTQYPSLQAHIFNVYSYKNPLWHGLRAAILNRTTLPNNIPPIYPPHDRENVLLIILLSALADAFSVLAPDFNLFGVVPIQGPINRAVAQNAYV</sequence>
<gene>
    <name type="primary">Segment-7</name>
    <name type="synonym">L7</name>
</gene>
<feature type="chain" id="PRO_0000222739" description="Core protein VP7">
    <location>
        <begin position="1"/>
        <end position="349"/>
    </location>
</feature>
<feature type="glycosylation site" description="N-linked (GlcNAc...) asparagine; by host" evidence="1">
    <location>
        <position position="148"/>
    </location>
</feature>
<feature type="glycosylation site" description="N-linked (GlcNAc...) asparagine; by host" evidence="1">
    <location>
        <position position="287"/>
    </location>
</feature>
<protein>
    <recommendedName>
        <fullName>Core protein VP7</fullName>
    </recommendedName>
</protein>
<proteinExistence type="inferred from homology"/>
<reference key="1">
    <citation type="journal article" date="1992" name="J. Gen. Virol.">
        <title>Characterization of the genes encoding two of the major capsid proteins of epizootic haemorrhagic disease virus indicates a close genetic relationship to bluetongue virus.</title>
        <authorList>
            <person name="Iwata H."/>
            <person name="Chuma T."/>
            <person name="Roy P."/>
        </authorList>
    </citation>
    <scope>NUCLEOTIDE SEQUENCE [GENOMIC RNA]</scope>
</reference>
<accession>Q00274</accession>
<evidence type="ECO:0000255" key="1"/>
<evidence type="ECO:0000305" key="2"/>
<organism>
    <name type="scientific">Epizootic hemorrhagic disease virus 1</name>
    <name type="common">EHDV-1</name>
    <dbReference type="NCBI Taxonomy" id="33720"/>
    <lineage>
        <taxon>Viruses</taxon>
        <taxon>Riboviria</taxon>
        <taxon>Orthornavirae</taxon>
        <taxon>Duplornaviricota</taxon>
        <taxon>Resentoviricetes</taxon>
        <taxon>Reovirales</taxon>
        <taxon>Sedoreoviridae</taxon>
        <taxon>Orbivirus</taxon>
        <taxon>Epizootic hemorrhagic disease virus</taxon>
    </lineage>
</organism>
<name>VP7_EHDV1</name>
<organismHost>
    <name type="scientific">Antilocapra americana</name>
    <name type="common">Pronghorn</name>
    <dbReference type="NCBI Taxonomy" id="9891"/>
</organismHost>
<organismHost>
    <name type="scientific">Odocoileus hemionus</name>
    <name type="common">Mule deer</name>
    <name type="synonym">Cervus hemionus</name>
    <dbReference type="NCBI Taxonomy" id="9872"/>
</organismHost>
<organismHost>
    <name type="scientific">Odocoileus virginianus</name>
    <name type="common">White-tailed deer</name>
    <dbReference type="NCBI Taxonomy" id="9874"/>
</organismHost>
<keyword id="KW-0167">Capsid protein</keyword>
<keyword id="KW-0325">Glycoprotein</keyword>
<keyword id="KW-1152">Outer capsid protein</keyword>
<keyword id="KW-0946">Virion</keyword>
<dbReference type="EMBL" id="D10766">
    <property type="protein sequence ID" value="BAA01596.1"/>
    <property type="molecule type" value="Genomic_RNA"/>
</dbReference>
<dbReference type="PIR" id="JQ1635">
    <property type="entry name" value="JQ1635"/>
</dbReference>
<dbReference type="SMR" id="Q00274"/>
<dbReference type="GlyCosmos" id="Q00274">
    <property type="glycosylation" value="2 sites, No reported glycans"/>
</dbReference>
<dbReference type="GO" id="GO:0019031">
    <property type="term" value="C:viral envelope"/>
    <property type="evidence" value="ECO:0007669"/>
    <property type="project" value="InterPro"/>
</dbReference>
<dbReference type="GO" id="GO:0039624">
    <property type="term" value="C:viral outer capsid"/>
    <property type="evidence" value="ECO:0007669"/>
    <property type="project" value="UniProtKB-KW"/>
</dbReference>
<dbReference type="GO" id="GO:0046789">
    <property type="term" value="F:host cell surface receptor binding"/>
    <property type="evidence" value="ECO:0007669"/>
    <property type="project" value="InterPro"/>
</dbReference>
<dbReference type="GO" id="GO:0005198">
    <property type="term" value="F:structural molecule activity"/>
    <property type="evidence" value="ECO:0007669"/>
    <property type="project" value="InterPro"/>
</dbReference>
<dbReference type="GO" id="GO:0019064">
    <property type="term" value="P:fusion of virus membrane with host plasma membrane"/>
    <property type="evidence" value="ECO:0007669"/>
    <property type="project" value="InterPro"/>
</dbReference>
<dbReference type="Gene3D" id="2.60.120.170">
    <property type="match status" value="1"/>
</dbReference>
<dbReference type="Gene3D" id="1.10.250.10">
    <property type="entry name" value="Bluetongue Virus 10, subunit 1, domain 1"/>
    <property type="match status" value="1"/>
</dbReference>
<dbReference type="Gene3D" id="1.10.170.10">
    <property type="entry name" value="Bluetongue Virus 10, subunit 1, domain 3"/>
    <property type="match status" value="1"/>
</dbReference>
<dbReference type="InterPro" id="IPR008980">
    <property type="entry name" value="Capsid_hemagglutn"/>
</dbReference>
<dbReference type="InterPro" id="IPR001803">
    <property type="entry name" value="Orbi_VP7_capsid"/>
</dbReference>
<dbReference type="InterPro" id="IPR023178">
    <property type="entry name" value="Orbi_VP7_capsid_C"/>
</dbReference>
<dbReference type="InterPro" id="IPR023176">
    <property type="entry name" value="Orbi_VP7_capsid_N"/>
</dbReference>
<dbReference type="InterPro" id="IPR008935">
    <property type="entry name" value="Virus_capsid_a-hlx_vir"/>
</dbReference>
<dbReference type="Pfam" id="PF00897">
    <property type="entry name" value="Orbi_VP7"/>
    <property type="match status" value="1"/>
</dbReference>
<dbReference type="PRINTS" id="PR00903">
    <property type="entry name" value="VP7CAPSID"/>
</dbReference>
<dbReference type="SUPFAM" id="SSF48345">
    <property type="entry name" value="A virus capsid protein alpha-helical domain"/>
    <property type="match status" value="1"/>
</dbReference>
<dbReference type="SUPFAM" id="SSF49818">
    <property type="entry name" value="Viral protein domain"/>
    <property type="match status" value="1"/>
</dbReference>